<dbReference type="EC" id="2.1.3.2" evidence="1"/>
<dbReference type="EMBL" id="CR522870">
    <property type="protein sequence ID" value="CAG34835.1"/>
    <property type="status" value="ALT_INIT"/>
    <property type="molecule type" value="Genomic_DNA"/>
</dbReference>
<dbReference type="RefSeq" id="WP_041277435.1">
    <property type="nucleotide sequence ID" value="NC_006138.1"/>
</dbReference>
<dbReference type="SMR" id="Q6AS40"/>
<dbReference type="STRING" id="177439.DP0106"/>
<dbReference type="KEGG" id="dps:DP0106"/>
<dbReference type="eggNOG" id="COG0540">
    <property type="taxonomic scope" value="Bacteria"/>
</dbReference>
<dbReference type="HOGENOM" id="CLU_043846_2_0_7"/>
<dbReference type="OrthoDB" id="9774690at2"/>
<dbReference type="UniPathway" id="UPA00070">
    <property type="reaction ID" value="UER00116"/>
</dbReference>
<dbReference type="Proteomes" id="UP000000602">
    <property type="component" value="Chromosome"/>
</dbReference>
<dbReference type="GO" id="GO:0005829">
    <property type="term" value="C:cytosol"/>
    <property type="evidence" value="ECO:0007669"/>
    <property type="project" value="TreeGrafter"/>
</dbReference>
<dbReference type="GO" id="GO:0016597">
    <property type="term" value="F:amino acid binding"/>
    <property type="evidence" value="ECO:0007669"/>
    <property type="project" value="InterPro"/>
</dbReference>
<dbReference type="GO" id="GO:0004070">
    <property type="term" value="F:aspartate carbamoyltransferase activity"/>
    <property type="evidence" value="ECO:0007669"/>
    <property type="project" value="UniProtKB-UniRule"/>
</dbReference>
<dbReference type="GO" id="GO:0006207">
    <property type="term" value="P:'de novo' pyrimidine nucleobase biosynthetic process"/>
    <property type="evidence" value="ECO:0007669"/>
    <property type="project" value="InterPro"/>
</dbReference>
<dbReference type="GO" id="GO:0044205">
    <property type="term" value="P:'de novo' UMP biosynthetic process"/>
    <property type="evidence" value="ECO:0007669"/>
    <property type="project" value="UniProtKB-UniRule"/>
</dbReference>
<dbReference type="GO" id="GO:0006520">
    <property type="term" value="P:amino acid metabolic process"/>
    <property type="evidence" value="ECO:0007669"/>
    <property type="project" value="InterPro"/>
</dbReference>
<dbReference type="Gene3D" id="3.40.50.1370">
    <property type="entry name" value="Aspartate/ornithine carbamoyltransferase"/>
    <property type="match status" value="2"/>
</dbReference>
<dbReference type="HAMAP" id="MF_00001">
    <property type="entry name" value="Asp_carb_tr"/>
    <property type="match status" value="1"/>
</dbReference>
<dbReference type="InterPro" id="IPR006132">
    <property type="entry name" value="Asp/Orn_carbamoyltranf_P-bd"/>
</dbReference>
<dbReference type="InterPro" id="IPR006130">
    <property type="entry name" value="Asp/Orn_carbamoylTrfase"/>
</dbReference>
<dbReference type="InterPro" id="IPR036901">
    <property type="entry name" value="Asp/Orn_carbamoylTrfase_sf"/>
</dbReference>
<dbReference type="InterPro" id="IPR002082">
    <property type="entry name" value="Asp_carbamoyltransf"/>
</dbReference>
<dbReference type="InterPro" id="IPR006131">
    <property type="entry name" value="Asp_carbamoyltransf_Asp/Orn-bd"/>
</dbReference>
<dbReference type="NCBIfam" id="TIGR00670">
    <property type="entry name" value="asp_carb_tr"/>
    <property type="match status" value="1"/>
</dbReference>
<dbReference type="NCBIfam" id="NF002032">
    <property type="entry name" value="PRK00856.1"/>
    <property type="match status" value="1"/>
</dbReference>
<dbReference type="PANTHER" id="PTHR45753:SF6">
    <property type="entry name" value="ASPARTATE CARBAMOYLTRANSFERASE"/>
    <property type="match status" value="1"/>
</dbReference>
<dbReference type="PANTHER" id="PTHR45753">
    <property type="entry name" value="ORNITHINE CARBAMOYLTRANSFERASE, MITOCHONDRIAL"/>
    <property type="match status" value="1"/>
</dbReference>
<dbReference type="Pfam" id="PF00185">
    <property type="entry name" value="OTCace"/>
    <property type="match status" value="1"/>
</dbReference>
<dbReference type="Pfam" id="PF02729">
    <property type="entry name" value="OTCace_N"/>
    <property type="match status" value="1"/>
</dbReference>
<dbReference type="PRINTS" id="PR00100">
    <property type="entry name" value="AOTCASE"/>
</dbReference>
<dbReference type="PRINTS" id="PR00101">
    <property type="entry name" value="ATCASE"/>
</dbReference>
<dbReference type="SUPFAM" id="SSF53671">
    <property type="entry name" value="Aspartate/ornithine carbamoyltransferase"/>
    <property type="match status" value="1"/>
</dbReference>
<dbReference type="PROSITE" id="PS00097">
    <property type="entry name" value="CARBAMOYLTRANSFERASE"/>
    <property type="match status" value="1"/>
</dbReference>
<keyword id="KW-0665">Pyrimidine biosynthesis</keyword>
<keyword id="KW-1185">Reference proteome</keyword>
<keyword id="KW-0808">Transferase</keyword>
<sequence length="318" mass="34297">MDSTYCFSHKHIFGIEQMSTEDIVHILDTAQSFKEISERSIKKVPTLRGKTVVNLFLEPSTRTRLSFEVAGKRLSADTFNISGSTSSTTKGETLVDTARNIEAMRPDAIVLRHSSSGAAQILAKHIDASIINAGDGTHEHPSQALLDMMTVRDNFGSIKGLIITIIGDIAHSRVALSDIIGFTKMGATVRLAGPATFIPMGIEAMGVEVYSSVAEAVQDANVVMALRIQKERQNDPLIPSLREYSICYGVNKKLLERAADDVIIMHPGPVNRGVELNPDVADGKGSVILDQVTNGVAVRMALLYLVAGGNRNGEEQGV</sequence>
<feature type="chain" id="PRO_0000113126" description="Aspartate carbamoyltransferase catalytic subunit">
    <location>
        <begin position="1"/>
        <end position="318"/>
    </location>
</feature>
<feature type="binding site" evidence="1">
    <location>
        <position position="62"/>
    </location>
    <ligand>
        <name>carbamoyl phosphate</name>
        <dbReference type="ChEBI" id="CHEBI:58228"/>
    </ligand>
</feature>
<feature type="binding site" evidence="1">
    <location>
        <position position="63"/>
    </location>
    <ligand>
        <name>carbamoyl phosphate</name>
        <dbReference type="ChEBI" id="CHEBI:58228"/>
    </ligand>
</feature>
<feature type="binding site" evidence="1">
    <location>
        <position position="90"/>
    </location>
    <ligand>
        <name>L-aspartate</name>
        <dbReference type="ChEBI" id="CHEBI:29991"/>
    </ligand>
</feature>
<feature type="binding site" evidence="1">
    <location>
        <position position="112"/>
    </location>
    <ligand>
        <name>carbamoyl phosphate</name>
        <dbReference type="ChEBI" id="CHEBI:58228"/>
    </ligand>
</feature>
<feature type="binding site" evidence="1">
    <location>
        <position position="140"/>
    </location>
    <ligand>
        <name>carbamoyl phosphate</name>
        <dbReference type="ChEBI" id="CHEBI:58228"/>
    </ligand>
</feature>
<feature type="binding site" evidence="1">
    <location>
        <position position="143"/>
    </location>
    <ligand>
        <name>carbamoyl phosphate</name>
        <dbReference type="ChEBI" id="CHEBI:58228"/>
    </ligand>
</feature>
<feature type="binding site" evidence="1">
    <location>
        <position position="173"/>
    </location>
    <ligand>
        <name>L-aspartate</name>
        <dbReference type="ChEBI" id="CHEBI:29991"/>
    </ligand>
</feature>
<feature type="binding site" evidence="1">
    <location>
        <position position="227"/>
    </location>
    <ligand>
        <name>L-aspartate</name>
        <dbReference type="ChEBI" id="CHEBI:29991"/>
    </ligand>
</feature>
<feature type="binding site" evidence="1">
    <location>
        <position position="268"/>
    </location>
    <ligand>
        <name>carbamoyl phosphate</name>
        <dbReference type="ChEBI" id="CHEBI:58228"/>
    </ligand>
</feature>
<feature type="binding site" evidence="1">
    <location>
        <position position="269"/>
    </location>
    <ligand>
        <name>carbamoyl phosphate</name>
        <dbReference type="ChEBI" id="CHEBI:58228"/>
    </ligand>
</feature>
<gene>
    <name evidence="1" type="primary">pyrB</name>
    <name type="ordered locus">DP0106</name>
</gene>
<organism>
    <name type="scientific">Desulfotalea psychrophila (strain LSv54 / DSM 12343)</name>
    <dbReference type="NCBI Taxonomy" id="177439"/>
    <lineage>
        <taxon>Bacteria</taxon>
        <taxon>Pseudomonadati</taxon>
        <taxon>Thermodesulfobacteriota</taxon>
        <taxon>Desulfobulbia</taxon>
        <taxon>Desulfobulbales</taxon>
        <taxon>Desulfocapsaceae</taxon>
        <taxon>Desulfotalea</taxon>
    </lineage>
</organism>
<comment type="function">
    <text evidence="1">Catalyzes the condensation of carbamoyl phosphate and aspartate to form carbamoyl aspartate and inorganic phosphate, the committed step in the de novo pyrimidine nucleotide biosynthesis pathway.</text>
</comment>
<comment type="catalytic activity">
    <reaction evidence="1">
        <text>carbamoyl phosphate + L-aspartate = N-carbamoyl-L-aspartate + phosphate + H(+)</text>
        <dbReference type="Rhea" id="RHEA:20013"/>
        <dbReference type="ChEBI" id="CHEBI:15378"/>
        <dbReference type="ChEBI" id="CHEBI:29991"/>
        <dbReference type="ChEBI" id="CHEBI:32814"/>
        <dbReference type="ChEBI" id="CHEBI:43474"/>
        <dbReference type="ChEBI" id="CHEBI:58228"/>
        <dbReference type="EC" id="2.1.3.2"/>
    </reaction>
</comment>
<comment type="pathway">
    <text evidence="1">Pyrimidine metabolism; UMP biosynthesis via de novo pathway; (S)-dihydroorotate from bicarbonate: step 2/3.</text>
</comment>
<comment type="subunit">
    <text evidence="1">Heterododecamer (2C3:3R2) of six catalytic PyrB chains organized as two trimers (C3), and six regulatory PyrI chains organized as three dimers (R2).</text>
</comment>
<comment type="similarity">
    <text evidence="1">Belongs to the aspartate/ornithine carbamoyltransferase superfamily. ATCase family.</text>
</comment>
<comment type="sequence caution" evidence="2">
    <conflict type="erroneous initiation">
        <sequence resource="EMBL-CDS" id="CAG34835"/>
    </conflict>
</comment>
<protein>
    <recommendedName>
        <fullName evidence="1">Aspartate carbamoyltransferase catalytic subunit</fullName>
        <ecNumber evidence="1">2.1.3.2</ecNumber>
    </recommendedName>
    <alternativeName>
        <fullName evidence="1">Aspartate transcarbamylase</fullName>
        <shortName evidence="1">ATCase</shortName>
    </alternativeName>
</protein>
<proteinExistence type="inferred from homology"/>
<evidence type="ECO:0000255" key="1">
    <source>
        <dbReference type="HAMAP-Rule" id="MF_00001"/>
    </source>
</evidence>
<evidence type="ECO:0000305" key="2"/>
<accession>Q6AS40</accession>
<reference key="1">
    <citation type="journal article" date="2004" name="Environ. Microbiol.">
        <title>The genome of Desulfotalea psychrophila, a sulfate-reducing bacterium from permanently cold Arctic sediments.</title>
        <authorList>
            <person name="Rabus R."/>
            <person name="Ruepp A."/>
            <person name="Frickey T."/>
            <person name="Rattei T."/>
            <person name="Fartmann B."/>
            <person name="Stark M."/>
            <person name="Bauer M."/>
            <person name="Zibat A."/>
            <person name="Lombardot T."/>
            <person name="Becker I."/>
            <person name="Amann J."/>
            <person name="Gellner K."/>
            <person name="Teeling H."/>
            <person name="Leuschner W.D."/>
            <person name="Gloeckner F.-O."/>
            <person name="Lupas A.N."/>
            <person name="Amann R."/>
            <person name="Klenk H.-P."/>
        </authorList>
    </citation>
    <scope>NUCLEOTIDE SEQUENCE [LARGE SCALE GENOMIC DNA]</scope>
    <source>
        <strain>DSM 12343 / LSv54</strain>
    </source>
</reference>
<name>PYRB_DESPS</name>